<gene>
    <name evidence="3" type="primary">CRR41</name>
    <name evidence="4" type="ordered locus">At1g51100</name>
    <name evidence="5" type="ORF">F23H24.6</name>
</gene>
<evidence type="ECO:0000255" key="1"/>
<evidence type="ECO:0000269" key="2">
    <source>
    </source>
</evidence>
<evidence type="ECO:0000303" key="3">
    <source>
    </source>
</evidence>
<evidence type="ECO:0000312" key="4">
    <source>
        <dbReference type="Araport" id="AT1G51100"/>
    </source>
</evidence>
<evidence type="ECO:0000312" key="5">
    <source>
        <dbReference type="EMBL" id="AAG50534.1"/>
    </source>
</evidence>
<keyword id="KW-0150">Chloroplast</keyword>
<keyword id="KW-0175">Coiled coil</keyword>
<keyword id="KW-0934">Plastid</keyword>
<keyword id="KW-1185">Reference proteome</keyword>
<keyword id="KW-0809">Transit peptide</keyword>
<name>CHR41_ARATH</name>
<organism>
    <name type="scientific">Arabidopsis thaliana</name>
    <name type="common">Mouse-ear cress</name>
    <dbReference type="NCBI Taxonomy" id="3702"/>
    <lineage>
        <taxon>Eukaryota</taxon>
        <taxon>Viridiplantae</taxon>
        <taxon>Streptophyta</taxon>
        <taxon>Embryophyta</taxon>
        <taxon>Tracheophyta</taxon>
        <taxon>Spermatophyta</taxon>
        <taxon>Magnoliopsida</taxon>
        <taxon>eudicotyledons</taxon>
        <taxon>Gunneridae</taxon>
        <taxon>Pentapetalae</taxon>
        <taxon>rosids</taxon>
        <taxon>malvids</taxon>
        <taxon>Brassicales</taxon>
        <taxon>Brassicaceae</taxon>
        <taxon>Camelineae</taxon>
        <taxon>Arabidopsis</taxon>
    </lineage>
</organism>
<feature type="transit peptide" description="Chloroplast" evidence="1">
    <location>
        <begin position="1"/>
        <end position="38"/>
    </location>
</feature>
<feature type="chain" id="PRO_0000454912" description="Protein CHLORORESPIRATORY REDUCTION 41, chloroplastic">
    <location>
        <begin position="39"/>
        <end position="211"/>
    </location>
</feature>
<feature type="coiled-coil region" evidence="1">
    <location>
        <begin position="136"/>
        <end position="163"/>
    </location>
</feature>
<accession>Q9C685</accession>
<comment type="function">
    <text evidence="2">Required for both formation and activity of the chloroplast NAD(P)H dehydrogenase (NDH) complex of the photosynthetic electron transport chain (PubMed:22274627). Functions in assembly or stabilization of the NDH complex; probably involved, together with NdhO and NdhH, in the formation of an NDH subcomplex A assembly intermediate (NAI500) (PubMed:22274627).</text>
</comment>
<comment type="subunit">
    <text evidence="2">Biogenesis factor component of the plastidial NDH subcomplex A.</text>
</comment>
<comment type="subcellular location">
    <subcellularLocation>
        <location evidence="1">Plastid</location>
        <location evidence="1">Chloroplast</location>
    </subcellularLocation>
    <subcellularLocation>
        <location evidence="2">Plastid</location>
        <location evidence="2">Chloroplast stroma</location>
    </subcellularLocation>
</comment>
<comment type="disruption phenotype">
    <text evidence="2">Specifically defective in the accumulation of subcomplex A, a stroma-protruding arm of the chloroplast NADH dehydrogenase-like complex (NDH).</text>
</comment>
<sequence>MASTSTLLLPSLSSKNLHIAVPIRTNSFVRRTTKFSTKCSSNPESKDQFINLTPAPESINTTSAEKFPIEKRRRSEIIRDRTQRGIEKPEPPNFEIGWKRTKEINLEKPKGYVIMDFLEKFEALMAREFGSKELLAKAGEIVAERAREEAEVLRDEGKVEERMVTELFRVLKLMEMDLAMVKASVKDETLSQRIEQARARCRQAILVANSF</sequence>
<dbReference type="EMBL" id="AC079828">
    <property type="protein sequence ID" value="AAG50534.1"/>
    <property type="molecule type" value="Genomic_DNA"/>
</dbReference>
<dbReference type="EMBL" id="CP002684">
    <property type="protein sequence ID" value="AEE32622.1"/>
    <property type="molecule type" value="Genomic_DNA"/>
</dbReference>
<dbReference type="EMBL" id="BT025782">
    <property type="protein sequence ID" value="ABF83672.1"/>
    <property type="molecule type" value="mRNA"/>
</dbReference>
<dbReference type="EMBL" id="AK228877">
    <property type="protein sequence ID" value="BAF00768.1"/>
    <property type="molecule type" value="mRNA"/>
</dbReference>
<dbReference type="EMBL" id="AY087073">
    <property type="protein sequence ID" value="AAM64634.1"/>
    <property type="molecule type" value="mRNA"/>
</dbReference>
<dbReference type="PIR" id="C96548">
    <property type="entry name" value="C96548"/>
</dbReference>
<dbReference type="RefSeq" id="NP_564582.1">
    <property type="nucleotide sequence ID" value="NM_103988.4"/>
</dbReference>
<dbReference type="SMR" id="Q9C685"/>
<dbReference type="FunCoup" id="Q9C685">
    <property type="interactions" value="1292"/>
</dbReference>
<dbReference type="STRING" id="3702.Q9C685"/>
<dbReference type="MetOSite" id="Q9C685"/>
<dbReference type="PaxDb" id="3702-AT1G51100.1"/>
<dbReference type="ProteomicsDB" id="181866"/>
<dbReference type="EnsemblPlants" id="AT1G51100.1">
    <property type="protein sequence ID" value="AT1G51100.1"/>
    <property type="gene ID" value="AT1G51100"/>
</dbReference>
<dbReference type="GeneID" id="841533"/>
<dbReference type="Gramene" id="AT1G51100.1">
    <property type="protein sequence ID" value="AT1G51100.1"/>
    <property type="gene ID" value="AT1G51100"/>
</dbReference>
<dbReference type="KEGG" id="ath:AT1G51100"/>
<dbReference type="Araport" id="AT1G51100"/>
<dbReference type="TAIR" id="AT1G51100">
    <property type="gene designation" value="CRR41"/>
</dbReference>
<dbReference type="eggNOG" id="ENOG502RXNJ">
    <property type="taxonomic scope" value="Eukaryota"/>
</dbReference>
<dbReference type="HOGENOM" id="CLU_064404_0_0_1"/>
<dbReference type="InParanoid" id="Q9C685"/>
<dbReference type="OMA" id="MGKEYGS"/>
<dbReference type="OrthoDB" id="2019407at2759"/>
<dbReference type="PhylomeDB" id="Q9C685"/>
<dbReference type="PRO" id="PR:Q9C685"/>
<dbReference type="Proteomes" id="UP000006548">
    <property type="component" value="Chromosome 1"/>
</dbReference>
<dbReference type="ExpressionAtlas" id="Q9C685">
    <property type="expression patterns" value="baseline and differential"/>
</dbReference>
<dbReference type="GO" id="GO:0009507">
    <property type="term" value="C:chloroplast"/>
    <property type="evidence" value="ECO:0007005"/>
    <property type="project" value="TAIR"/>
</dbReference>
<dbReference type="GO" id="GO:0009570">
    <property type="term" value="C:chloroplast stroma"/>
    <property type="evidence" value="ECO:0000314"/>
    <property type="project" value="TAIR"/>
</dbReference>
<dbReference type="GO" id="GO:0010258">
    <property type="term" value="P:NADH dehydrogenase complex (plastoquinone) assembly"/>
    <property type="evidence" value="ECO:0000315"/>
    <property type="project" value="TAIR"/>
</dbReference>
<dbReference type="InterPro" id="IPR053351">
    <property type="entry name" value="Chloroplast_NDH_Assembly"/>
</dbReference>
<dbReference type="PANTHER" id="PTHR36719">
    <property type="entry name" value="OS01G0676200 PROTEIN"/>
    <property type="match status" value="1"/>
</dbReference>
<dbReference type="PANTHER" id="PTHR36719:SF1">
    <property type="entry name" value="PROTEIN CHLORORESPIRATORY REDUCTION 41, CHLOROPLASTIC"/>
    <property type="match status" value="1"/>
</dbReference>
<protein>
    <recommendedName>
        <fullName evidence="3">Protein CHLORORESPIRATORY REDUCTION 41, chloroplastic</fullName>
    </recommendedName>
</protein>
<reference key="1">
    <citation type="journal article" date="2000" name="Nature">
        <title>Sequence and analysis of chromosome 1 of the plant Arabidopsis thaliana.</title>
        <authorList>
            <person name="Theologis A."/>
            <person name="Ecker J.R."/>
            <person name="Palm C.J."/>
            <person name="Federspiel N.A."/>
            <person name="Kaul S."/>
            <person name="White O."/>
            <person name="Alonso J."/>
            <person name="Altafi H."/>
            <person name="Araujo R."/>
            <person name="Bowman C.L."/>
            <person name="Brooks S.Y."/>
            <person name="Buehler E."/>
            <person name="Chan A."/>
            <person name="Chao Q."/>
            <person name="Chen H."/>
            <person name="Cheuk R.F."/>
            <person name="Chin C.W."/>
            <person name="Chung M.K."/>
            <person name="Conn L."/>
            <person name="Conway A.B."/>
            <person name="Conway A.R."/>
            <person name="Creasy T.H."/>
            <person name="Dewar K."/>
            <person name="Dunn P."/>
            <person name="Etgu P."/>
            <person name="Feldblyum T.V."/>
            <person name="Feng J.-D."/>
            <person name="Fong B."/>
            <person name="Fujii C.Y."/>
            <person name="Gill J.E."/>
            <person name="Goldsmith A.D."/>
            <person name="Haas B."/>
            <person name="Hansen N.F."/>
            <person name="Hughes B."/>
            <person name="Huizar L."/>
            <person name="Hunter J.L."/>
            <person name="Jenkins J."/>
            <person name="Johnson-Hopson C."/>
            <person name="Khan S."/>
            <person name="Khaykin E."/>
            <person name="Kim C.J."/>
            <person name="Koo H.L."/>
            <person name="Kremenetskaia I."/>
            <person name="Kurtz D.B."/>
            <person name="Kwan A."/>
            <person name="Lam B."/>
            <person name="Langin-Hooper S."/>
            <person name="Lee A."/>
            <person name="Lee J.M."/>
            <person name="Lenz C.A."/>
            <person name="Li J.H."/>
            <person name="Li Y.-P."/>
            <person name="Lin X."/>
            <person name="Liu S.X."/>
            <person name="Liu Z.A."/>
            <person name="Luros J.S."/>
            <person name="Maiti R."/>
            <person name="Marziali A."/>
            <person name="Militscher J."/>
            <person name="Miranda M."/>
            <person name="Nguyen M."/>
            <person name="Nierman W.C."/>
            <person name="Osborne B.I."/>
            <person name="Pai G."/>
            <person name="Peterson J."/>
            <person name="Pham P.K."/>
            <person name="Rizzo M."/>
            <person name="Rooney T."/>
            <person name="Rowley D."/>
            <person name="Sakano H."/>
            <person name="Salzberg S.L."/>
            <person name="Schwartz J.R."/>
            <person name="Shinn P."/>
            <person name="Southwick A.M."/>
            <person name="Sun H."/>
            <person name="Tallon L.J."/>
            <person name="Tambunga G."/>
            <person name="Toriumi M.J."/>
            <person name="Town C.D."/>
            <person name="Utterback T."/>
            <person name="Van Aken S."/>
            <person name="Vaysberg M."/>
            <person name="Vysotskaia V.S."/>
            <person name="Walker M."/>
            <person name="Wu D."/>
            <person name="Yu G."/>
            <person name="Fraser C.M."/>
            <person name="Venter J.C."/>
            <person name="Davis R.W."/>
        </authorList>
    </citation>
    <scope>NUCLEOTIDE SEQUENCE [LARGE SCALE GENOMIC DNA]</scope>
    <source>
        <strain>cv. Columbia</strain>
    </source>
</reference>
<reference key="2">
    <citation type="journal article" date="2017" name="Plant J.">
        <title>Araport11: a complete reannotation of the Arabidopsis thaliana reference genome.</title>
        <authorList>
            <person name="Cheng C.Y."/>
            <person name="Krishnakumar V."/>
            <person name="Chan A.P."/>
            <person name="Thibaud-Nissen F."/>
            <person name="Schobel S."/>
            <person name="Town C.D."/>
        </authorList>
    </citation>
    <scope>GENOME REANNOTATION</scope>
    <source>
        <strain>cv. Columbia</strain>
    </source>
</reference>
<reference key="3">
    <citation type="submission" date="2006-06" db="EMBL/GenBank/DDBJ databases">
        <title>Arabidopsis ORF clones.</title>
        <authorList>
            <person name="Kim C.J."/>
            <person name="Chen H."/>
            <person name="Quinitio C."/>
            <person name="Shinn P."/>
            <person name="Ecker J.R."/>
        </authorList>
    </citation>
    <scope>NUCLEOTIDE SEQUENCE [LARGE SCALE MRNA]</scope>
    <source>
        <strain>cv. Columbia</strain>
    </source>
</reference>
<reference key="4">
    <citation type="submission" date="2006-07" db="EMBL/GenBank/DDBJ databases">
        <title>Large-scale analysis of RIKEN Arabidopsis full-length (RAFL) cDNAs.</title>
        <authorList>
            <person name="Totoki Y."/>
            <person name="Seki M."/>
            <person name="Ishida J."/>
            <person name="Nakajima M."/>
            <person name="Enju A."/>
            <person name="Kamiya A."/>
            <person name="Narusaka M."/>
            <person name="Shin-i T."/>
            <person name="Nakagawa M."/>
            <person name="Sakamoto N."/>
            <person name="Oishi K."/>
            <person name="Kohara Y."/>
            <person name="Kobayashi M."/>
            <person name="Toyoda A."/>
            <person name="Sakaki Y."/>
            <person name="Sakurai T."/>
            <person name="Iida K."/>
            <person name="Akiyama K."/>
            <person name="Satou M."/>
            <person name="Toyoda T."/>
            <person name="Konagaya A."/>
            <person name="Carninci P."/>
            <person name="Kawai J."/>
            <person name="Hayashizaki Y."/>
            <person name="Shinozaki K."/>
        </authorList>
    </citation>
    <scope>NUCLEOTIDE SEQUENCE [LARGE SCALE MRNA]</scope>
    <source>
        <strain>cv. Columbia</strain>
    </source>
</reference>
<reference key="5">
    <citation type="submission" date="2002-03" db="EMBL/GenBank/DDBJ databases">
        <title>Full-length cDNA from Arabidopsis thaliana.</title>
        <authorList>
            <person name="Brover V.V."/>
            <person name="Troukhan M.E."/>
            <person name="Alexandrov N.A."/>
            <person name="Lu Y.-P."/>
            <person name="Flavell R.B."/>
            <person name="Feldmann K.A."/>
        </authorList>
    </citation>
    <scope>NUCLEOTIDE SEQUENCE [LARGE SCALE MRNA]</scope>
</reference>
<reference key="6">
    <citation type="journal article" date="2012" name="Plant Cell">
        <title>Multistep assembly of chloroplast NADH dehydrogenase-like subcomplex A requires several nucleus-encoded proteins, including CRR41 and CRR42, in Arabidopsis.</title>
        <authorList>
            <person name="Peng L."/>
            <person name="Fukao Y."/>
            <person name="Fujiwara M."/>
            <person name="Shikanai T."/>
        </authorList>
    </citation>
    <scope>FUNCTION</scope>
    <scope>DISRUPTION PHENOTYPE</scope>
    <scope>SUBUNIT</scope>
    <scope>SUBCELLULAR LOCATION</scope>
</reference>
<proteinExistence type="evidence at protein level"/>